<protein>
    <recommendedName>
        <fullName>Aspartate-semialdehyde dehydrogenase 2</fullName>
        <shortName>ASA dehydrogenase 2</shortName>
        <shortName>ASADH 2</shortName>
        <ecNumber evidence="2">1.2.1.11</ecNumber>
    </recommendedName>
    <alternativeName>
        <fullName>Aspartate-beta-semialdehyde dehydrogenase 2</fullName>
    </alternativeName>
</protein>
<sequence length="337" mass="37375">MSQQFNVAIFGATGAVGETMLEVLQEREFPVDELFLLASERSEGKTYRFNGKTVRVQNVEEFDWSQVHIALFSAGGELSAKWAPIAAEAGVVVIDNTSHFRYDYDIPLVVPEVNPEAIAEFRNRNIIANPNCSTIQMLVALKPIYDAVGIERINVTTYQSVSGAGKAGIDELAGQTAKLLNGYPAETNTFSQQIAFNCIPQIDQFMDNGYTKEEMKMVWETQKIFNDPSIMVNPTCVRVPVFYGHAEAVHVETRAPIDAEQVMDMLEQTDGIELFRGADFPTQVRDAGGKDHVLVGRVRNDISHHSGINLWVVADNVRKGAATNAVQIAELLVRDYF</sequence>
<proteinExistence type="evidence at protein level"/>
<feature type="chain" id="PRO_0000141394" description="Aspartate-semialdehyde dehydrogenase 2">
    <location>
        <begin position="1"/>
        <end position="337"/>
    </location>
</feature>
<feature type="active site" description="Acyl-thioester intermediate" evidence="3">
    <location>
        <position position="132"/>
    </location>
</feature>
<feature type="active site" description="Proton acceptor" evidence="1">
    <location>
        <position position="245"/>
    </location>
</feature>
<feature type="binding site" evidence="1">
    <location>
        <begin position="13"/>
        <end position="16"/>
    </location>
    <ligand>
        <name>NADP(+)</name>
        <dbReference type="ChEBI" id="CHEBI:58349"/>
    </ligand>
</feature>
<feature type="binding site" evidence="1">
    <location>
        <begin position="41"/>
        <end position="42"/>
    </location>
    <ligand>
        <name>NADP(+)</name>
        <dbReference type="ChEBI" id="CHEBI:58349"/>
    </ligand>
</feature>
<feature type="binding site" evidence="1">
    <location>
        <position position="101"/>
    </location>
    <ligand>
        <name>phosphate</name>
        <dbReference type="ChEBI" id="CHEBI:43474"/>
    </ligand>
</feature>
<feature type="binding site" evidence="1">
    <location>
        <position position="159"/>
    </location>
    <ligand>
        <name>substrate</name>
    </ligand>
</feature>
<feature type="binding site" evidence="1">
    <location>
        <begin position="162"/>
        <end position="163"/>
    </location>
    <ligand>
        <name>NADP(+)</name>
        <dbReference type="ChEBI" id="CHEBI:58349"/>
    </ligand>
</feature>
<feature type="binding site" evidence="1">
    <location>
        <position position="216"/>
    </location>
    <ligand>
        <name>phosphate</name>
        <dbReference type="ChEBI" id="CHEBI:43474"/>
    </ligand>
</feature>
<feature type="binding site" evidence="1">
    <location>
        <position position="238"/>
    </location>
    <ligand>
        <name>substrate</name>
    </ligand>
</feature>
<feature type="binding site" evidence="1">
    <location>
        <position position="316"/>
    </location>
    <ligand>
        <name>NADP(+)</name>
        <dbReference type="ChEBI" id="CHEBI:58349"/>
    </ligand>
</feature>
<feature type="sequence variant" description="In strain: C7258.">
    <original>E</original>
    <variation>D</variation>
    <location>
        <position position="40"/>
    </location>
</feature>
<feature type="sequence conflict" description="In Ref. 1; CAA39048." evidence="4" ref="1">
    <original>NT</original>
    <variation>QA</variation>
    <location>
        <begin position="188"/>
        <end position="189"/>
    </location>
</feature>
<feature type="strand" evidence="6">
    <location>
        <begin position="5"/>
        <end position="11"/>
    </location>
</feature>
<feature type="helix" evidence="6">
    <location>
        <begin position="15"/>
        <end position="26"/>
    </location>
</feature>
<feature type="strand" evidence="6">
    <location>
        <begin position="31"/>
        <end position="38"/>
    </location>
</feature>
<feature type="turn" evidence="6">
    <location>
        <begin position="40"/>
        <end position="44"/>
    </location>
</feature>
<feature type="strand" evidence="6">
    <location>
        <begin position="46"/>
        <end position="49"/>
    </location>
</feature>
<feature type="strand" evidence="6">
    <location>
        <begin position="52"/>
        <end position="58"/>
    </location>
</feature>
<feature type="helix" evidence="6">
    <location>
        <begin position="59"/>
        <end position="61"/>
    </location>
</feature>
<feature type="helix" evidence="6">
    <location>
        <begin position="64"/>
        <end position="66"/>
    </location>
</feature>
<feature type="strand" evidence="6">
    <location>
        <begin position="68"/>
        <end position="72"/>
    </location>
</feature>
<feature type="helix" evidence="6">
    <location>
        <begin position="76"/>
        <end position="88"/>
    </location>
</feature>
<feature type="strand" evidence="6">
    <location>
        <begin position="92"/>
        <end position="95"/>
    </location>
</feature>
<feature type="turn" evidence="6">
    <location>
        <begin position="99"/>
        <end position="102"/>
    </location>
</feature>
<feature type="turn" evidence="6">
    <location>
        <begin position="111"/>
        <end position="113"/>
    </location>
</feature>
<feature type="helix" evidence="6">
    <location>
        <begin position="115"/>
        <end position="123"/>
    </location>
</feature>
<feature type="strand" evidence="6">
    <location>
        <begin position="125"/>
        <end position="128"/>
    </location>
</feature>
<feature type="helix" evidence="6">
    <location>
        <begin position="132"/>
        <end position="148"/>
    </location>
</feature>
<feature type="strand" evidence="6">
    <location>
        <begin position="150"/>
        <end position="163"/>
    </location>
</feature>
<feature type="helix" evidence="6">
    <location>
        <begin position="165"/>
        <end position="180"/>
    </location>
</feature>
<feature type="helix" evidence="6">
    <location>
        <begin position="188"/>
        <end position="191"/>
    </location>
</feature>
<feature type="helix" evidence="6">
    <location>
        <begin position="195"/>
        <end position="198"/>
    </location>
</feature>
<feature type="turn" evidence="6">
    <location>
        <begin position="204"/>
        <end position="206"/>
    </location>
</feature>
<feature type="helix" evidence="6">
    <location>
        <begin position="212"/>
        <end position="224"/>
    </location>
</feature>
<feature type="strand" evidence="6">
    <location>
        <begin position="231"/>
        <end position="241"/>
    </location>
</feature>
<feature type="strand" evidence="6">
    <location>
        <begin position="243"/>
        <end position="255"/>
    </location>
</feature>
<feature type="helix" evidence="6">
    <location>
        <begin position="259"/>
        <end position="268"/>
    </location>
</feature>
<feature type="strand" evidence="6">
    <location>
        <begin position="272"/>
        <end position="274"/>
    </location>
</feature>
<feature type="helix" evidence="6">
    <location>
        <begin position="281"/>
        <end position="283"/>
    </location>
</feature>
<feature type="strand" evidence="6">
    <location>
        <begin position="289"/>
        <end position="291"/>
    </location>
</feature>
<feature type="strand" evidence="6">
    <location>
        <begin position="293"/>
        <end position="301"/>
    </location>
</feature>
<feature type="strand" evidence="6">
    <location>
        <begin position="304"/>
        <end position="316"/>
    </location>
</feature>
<feature type="helix" evidence="6">
    <location>
        <begin position="317"/>
        <end position="336"/>
    </location>
</feature>
<accession>P23247</accession>
<accession>O34226</accession>
<accession>Q9KQ93</accession>
<name>DHAS2_VIBCH</name>
<gene>
    <name type="primary">asd2</name>
    <name type="synonym">asd</name>
    <name type="ordered locus">VC_2107</name>
</gene>
<reference key="1">
    <citation type="submission" date="1990-11" db="EMBL/GenBank/DDBJ databases">
        <authorList>
            <person name="Avest A.R."/>
            <person name="Frits R.M."/>
        </authorList>
    </citation>
    <scope>NUCLEOTIDE SEQUENCE [GENOMIC DNA]</scope>
    <source>
        <strain>CDV 101</strain>
    </source>
</reference>
<reference key="2">
    <citation type="submission" date="1997-10" db="EMBL/GenBank/DDBJ databases">
        <authorList>
            <person name="Fando R."/>
            <person name="Benitez J."/>
        </authorList>
    </citation>
    <scope>NUCLEOTIDE SEQUENCE [GENOMIC DNA]</scope>
    <source>
        <strain>El Tor C7258 / Serotype O1</strain>
    </source>
</reference>
<reference key="3">
    <citation type="journal article" date="2000" name="Nature">
        <title>DNA sequence of both chromosomes of the cholera pathogen Vibrio cholerae.</title>
        <authorList>
            <person name="Heidelberg J.F."/>
            <person name="Eisen J.A."/>
            <person name="Nelson W.C."/>
            <person name="Clayton R.A."/>
            <person name="Gwinn M.L."/>
            <person name="Dodson R.J."/>
            <person name="Haft D.H."/>
            <person name="Hickey E.K."/>
            <person name="Peterson J.D."/>
            <person name="Umayam L.A."/>
            <person name="Gill S.R."/>
            <person name="Nelson K.E."/>
            <person name="Read T.D."/>
            <person name="Tettelin H."/>
            <person name="Richardson D.L."/>
            <person name="Ermolaeva M.D."/>
            <person name="Vamathevan J.J."/>
            <person name="Bass S."/>
            <person name="Qin H."/>
            <person name="Dragoi I."/>
            <person name="Sellers P."/>
            <person name="McDonald L.A."/>
            <person name="Utterback T.R."/>
            <person name="Fleischmann R.D."/>
            <person name="Nierman W.C."/>
            <person name="White O."/>
            <person name="Salzberg S.L."/>
            <person name="Smith H.O."/>
            <person name="Colwell R.R."/>
            <person name="Mekalanos J.J."/>
            <person name="Venter J.C."/>
            <person name="Fraser C.M."/>
        </authorList>
    </citation>
    <scope>NUCLEOTIDE SEQUENCE [LARGE SCALE GENOMIC DNA]</scope>
    <source>
        <strain>ATCC 39315 / El Tor Inaba N16961</strain>
    </source>
</reference>
<reference key="4">
    <citation type="journal article" date="2002" name="Protein Expr. Purif.">
        <title>Expression and purification of aspartate beta-semialdehyde dehydrogenase from infectious microorganisms.</title>
        <authorList>
            <person name="Moore R.A."/>
            <person name="Bocik W.E."/>
            <person name="Viola R.E."/>
        </authorList>
    </citation>
    <scope>FUNCTION</scope>
    <scope>CATALYTIC ACTIVITY</scope>
    <scope>KINETIC PARAMETERS</scope>
    <source>
        <strain>ATCC 39315 / El Tor Inaba N16961</strain>
    </source>
</reference>
<reference key="5">
    <citation type="journal article" date="2008" name="Acta Crystallogr. D">
        <title>The structure of a redundant enzyme: a second isoform of aspartate beta-semialdehyde dehydrogenase in Vibrio cholerae.</title>
        <authorList>
            <person name="Viola R.E."/>
            <person name="Liu X."/>
            <person name="Ohren J.F."/>
            <person name="Faehnle C.R."/>
        </authorList>
    </citation>
    <scope>X-RAY CRYSTALLOGRAPHY (2.03 ANGSTROMS) OF APOENZYME AND IN COMPLEX WITH L-ASPARTATE-SEMIALDEHYDE</scope>
    <scope>SUBUNIT</scope>
    <scope>DOMAIN</scope>
    <source>
        <strain>ATCC 39315 / El Tor Inaba N16961</strain>
    </source>
</reference>
<organism>
    <name type="scientific">Vibrio cholerae serotype O1 (strain ATCC 39315 / El Tor Inaba N16961)</name>
    <dbReference type="NCBI Taxonomy" id="243277"/>
    <lineage>
        <taxon>Bacteria</taxon>
        <taxon>Pseudomonadati</taxon>
        <taxon>Pseudomonadota</taxon>
        <taxon>Gammaproteobacteria</taxon>
        <taxon>Vibrionales</taxon>
        <taxon>Vibrionaceae</taxon>
        <taxon>Vibrio</taxon>
    </lineage>
</organism>
<comment type="function">
    <text evidence="2">Catalyzes the NADPH-dependent formation of L-aspartate-semialdehyde (L-ASA) by the reductive dephosphorylation of L-aspartyl-4-phosphate.</text>
</comment>
<comment type="catalytic activity">
    <reaction evidence="2">
        <text>L-aspartate 4-semialdehyde + phosphate + NADP(+) = 4-phospho-L-aspartate + NADPH + H(+)</text>
        <dbReference type="Rhea" id="RHEA:24284"/>
        <dbReference type="ChEBI" id="CHEBI:15378"/>
        <dbReference type="ChEBI" id="CHEBI:43474"/>
        <dbReference type="ChEBI" id="CHEBI:57535"/>
        <dbReference type="ChEBI" id="CHEBI:57783"/>
        <dbReference type="ChEBI" id="CHEBI:58349"/>
        <dbReference type="ChEBI" id="CHEBI:537519"/>
        <dbReference type="EC" id="1.2.1.11"/>
    </reaction>
</comment>
<comment type="biophysicochemical properties">
    <kinetics>
        <KM evidence="2">0.16 mM for L-aspartate 4-semialdehyde</KM>
        <KM evidence="2">0.36 mM for NADP(+)</KM>
        <KM evidence="2">22 mM for phosphate</KM>
    </kinetics>
</comment>
<comment type="pathway">
    <text evidence="1">Amino-acid biosynthesis; L-lysine biosynthesis via DAP pathway; (S)-tetrahydrodipicolinate from L-aspartate: step 2/4.</text>
</comment>
<comment type="pathway">
    <text evidence="1">Amino-acid biosynthesis; L-methionine biosynthesis via de novo pathway; L-homoserine from L-aspartate: step 2/3.</text>
</comment>
<comment type="pathway">
    <text evidence="1">Amino-acid biosynthesis; L-threonine biosynthesis; L-threonine from L-aspartate: step 2/5.</text>
</comment>
<comment type="subunit">
    <text evidence="1 5">Homodimer.</text>
</comment>
<comment type="domain">
    <text evidence="3">Consists of two domains, an N-terminal nucleotide-binding domain and a C-terminal dimerization domain.</text>
</comment>
<comment type="similarity">
    <text evidence="1">Belongs to the aspartate-semialdehyde dehydrogenase family.</text>
</comment>
<comment type="sequence caution" evidence="4">
    <conflict type="erroneous initiation">
        <sequence resource="EMBL-CDS" id="AAF95253"/>
    </conflict>
    <text>Extended N-terminus.</text>
</comment>
<evidence type="ECO:0000255" key="1">
    <source>
        <dbReference type="HAMAP-Rule" id="MF_02121"/>
    </source>
</evidence>
<evidence type="ECO:0000269" key="2">
    <source>
    </source>
</evidence>
<evidence type="ECO:0000269" key="3">
    <source>
    </source>
</evidence>
<evidence type="ECO:0000305" key="4"/>
<evidence type="ECO:0000305" key="5">
    <source>
    </source>
</evidence>
<evidence type="ECO:0007829" key="6">
    <source>
        <dbReference type="PDB" id="2R00"/>
    </source>
</evidence>
<keyword id="KW-0002">3D-structure</keyword>
<keyword id="KW-0028">Amino-acid biosynthesis</keyword>
<keyword id="KW-0220">Diaminopimelate biosynthesis</keyword>
<keyword id="KW-0457">Lysine biosynthesis</keyword>
<keyword id="KW-0486">Methionine biosynthesis</keyword>
<keyword id="KW-0521">NADP</keyword>
<keyword id="KW-0560">Oxidoreductase</keyword>
<keyword id="KW-1185">Reference proteome</keyword>
<keyword id="KW-0791">Threonine biosynthesis</keyword>
<dbReference type="EC" id="1.2.1.11" evidence="2"/>
<dbReference type="EMBL" id="X55363">
    <property type="protein sequence ID" value="CAA39048.1"/>
    <property type="molecule type" value="Genomic_DNA"/>
</dbReference>
<dbReference type="EMBL" id="Y15281">
    <property type="protein sequence ID" value="CAA75569.1"/>
    <property type="molecule type" value="Genomic_DNA"/>
</dbReference>
<dbReference type="EMBL" id="AE003852">
    <property type="protein sequence ID" value="AAF95253.1"/>
    <property type="status" value="ALT_INIT"/>
    <property type="molecule type" value="Genomic_DNA"/>
</dbReference>
<dbReference type="PIR" id="B82118">
    <property type="entry name" value="B82118"/>
</dbReference>
<dbReference type="PIR" id="S14523">
    <property type="entry name" value="S14523"/>
</dbReference>
<dbReference type="RefSeq" id="NP_231739.1">
    <property type="nucleotide sequence ID" value="NC_002505.1"/>
</dbReference>
<dbReference type="RefSeq" id="WP_000082625.1">
    <property type="nucleotide sequence ID" value="NZ_LT906614.1"/>
</dbReference>
<dbReference type="PDB" id="2QZ9">
    <property type="method" value="X-ray"/>
    <property type="resolution" value="2.20 A"/>
    <property type="chains" value="A/B/C=2-337"/>
</dbReference>
<dbReference type="PDB" id="2R00">
    <property type="method" value="X-ray"/>
    <property type="resolution" value="2.03 A"/>
    <property type="chains" value="A/B/C=2-337"/>
</dbReference>
<dbReference type="PDBsum" id="2QZ9"/>
<dbReference type="PDBsum" id="2R00"/>
<dbReference type="SMR" id="P23247"/>
<dbReference type="STRING" id="243277.VC_2107"/>
<dbReference type="DNASU" id="2613363"/>
<dbReference type="EnsemblBacteria" id="AAF95253">
    <property type="protein sequence ID" value="AAF95253"/>
    <property type="gene ID" value="VC_2107"/>
</dbReference>
<dbReference type="KEGG" id="vch:VC_2107"/>
<dbReference type="PATRIC" id="fig|243277.26.peg.2013"/>
<dbReference type="eggNOG" id="COG0136">
    <property type="taxonomic scope" value="Bacteria"/>
</dbReference>
<dbReference type="HOGENOM" id="CLU_049966_0_1_6"/>
<dbReference type="BRENDA" id="1.2.1.11">
    <property type="organism ID" value="6626"/>
</dbReference>
<dbReference type="SABIO-RK" id="P23247"/>
<dbReference type="UniPathway" id="UPA00034">
    <property type="reaction ID" value="UER00016"/>
</dbReference>
<dbReference type="UniPathway" id="UPA00050">
    <property type="reaction ID" value="UER00463"/>
</dbReference>
<dbReference type="UniPathway" id="UPA00051">
    <property type="reaction ID" value="UER00464"/>
</dbReference>
<dbReference type="EvolutionaryTrace" id="P23247"/>
<dbReference type="Proteomes" id="UP000000584">
    <property type="component" value="Chromosome 1"/>
</dbReference>
<dbReference type="GO" id="GO:0004073">
    <property type="term" value="F:aspartate-semialdehyde dehydrogenase activity"/>
    <property type="evidence" value="ECO:0007669"/>
    <property type="project" value="UniProtKB-UniRule"/>
</dbReference>
<dbReference type="GO" id="GO:0051287">
    <property type="term" value="F:NAD binding"/>
    <property type="evidence" value="ECO:0007669"/>
    <property type="project" value="InterPro"/>
</dbReference>
<dbReference type="GO" id="GO:0050661">
    <property type="term" value="F:NADP binding"/>
    <property type="evidence" value="ECO:0007669"/>
    <property type="project" value="UniProtKB-UniRule"/>
</dbReference>
<dbReference type="GO" id="GO:0046983">
    <property type="term" value="F:protein dimerization activity"/>
    <property type="evidence" value="ECO:0007669"/>
    <property type="project" value="InterPro"/>
</dbReference>
<dbReference type="GO" id="GO:0071266">
    <property type="term" value="P:'de novo' L-methionine biosynthetic process"/>
    <property type="evidence" value="ECO:0007669"/>
    <property type="project" value="UniProtKB-UniRule"/>
</dbReference>
<dbReference type="GO" id="GO:0019877">
    <property type="term" value="P:diaminopimelate biosynthetic process"/>
    <property type="evidence" value="ECO:0007669"/>
    <property type="project" value="UniProtKB-UniRule"/>
</dbReference>
<dbReference type="GO" id="GO:0009097">
    <property type="term" value="P:isoleucine biosynthetic process"/>
    <property type="evidence" value="ECO:0007669"/>
    <property type="project" value="InterPro"/>
</dbReference>
<dbReference type="GO" id="GO:0009089">
    <property type="term" value="P:lysine biosynthetic process via diaminopimelate"/>
    <property type="evidence" value="ECO:0007669"/>
    <property type="project" value="UniProtKB-UniRule"/>
</dbReference>
<dbReference type="GO" id="GO:0009088">
    <property type="term" value="P:threonine biosynthetic process"/>
    <property type="evidence" value="ECO:0007669"/>
    <property type="project" value="UniProtKB-UniRule"/>
</dbReference>
<dbReference type="CDD" id="cd18131">
    <property type="entry name" value="ASADH_C_bac_euk_like"/>
    <property type="match status" value="1"/>
</dbReference>
<dbReference type="CDD" id="cd02316">
    <property type="entry name" value="VcASADH2_like_N"/>
    <property type="match status" value="1"/>
</dbReference>
<dbReference type="FunFam" id="3.40.50.720:FF:000099">
    <property type="entry name" value="Aspartate-semialdehyde dehydrogenase"/>
    <property type="match status" value="1"/>
</dbReference>
<dbReference type="FunFam" id="3.30.360.10:FF:000054">
    <property type="entry name" value="Aspartate-semialdehyde dehydrogenase 2"/>
    <property type="match status" value="1"/>
</dbReference>
<dbReference type="Gene3D" id="3.30.360.10">
    <property type="entry name" value="Dihydrodipicolinate Reductase, domain 2"/>
    <property type="match status" value="1"/>
</dbReference>
<dbReference type="Gene3D" id="3.40.50.720">
    <property type="entry name" value="NAD(P)-binding Rossmann-like Domain"/>
    <property type="match status" value="1"/>
</dbReference>
<dbReference type="HAMAP" id="MF_02121">
    <property type="entry name" value="ASADH"/>
    <property type="match status" value="1"/>
</dbReference>
<dbReference type="InterPro" id="IPR000319">
    <property type="entry name" value="Asp-semialdehyde_DH_CS"/>
</dbReference>
<dbReference type="InterPro" id="IPR012080">
    <property type="entry name" value="Asp_semialdehyde_DH"/>
</dbReference>
<dbReference type="InterPro" id="IPR005986">
    <property type="entry name" value="Asp_semialdehyde_DH_beta"/>
</dbReference>
<dbReference type="InterPro" id="IPR036291">
    <property type="entry name" value="NAD(P)-bd_dom_sf"/>
</dbReference>
<dbReference type="InterPro" id="IPR000534">
    <property type="entry name" value="Semialdehyde_DH_NAD-bd"/>
</dbReference>
<dbReference type="InterPro" id="IPR012280">
    <property type="entry name" value="Semialdhyde_DH_dimer_dom"/>
</dbReference>
<dbReference type="NCBIfam" id="TIGR01296">
    <property type="entry name" value="asd_B"/>
    <property type="match status" value="1"/>
</dbReference>
<dbReference type="NCBIfam" id="NF004224">
    <property type="entry name" value="PRK05671.1"/>
    <property type="match status" value="1"/>
</dbReference>
<dbReference type="NCBIfam" id="NF005957">
    <property type="entry name" value="PRK08040.1"/>
    <property type="match status" value="1"/>
</dbReference>
<dbReference type="NCBIfam" id="NF011456">
    <property type="entry name" value="PRK14874.1"/>
    <property type="match status" value="1"/>
</dbReference>
<dbReference type="PANTHER" id="PTHR46278:SF2">
    <property type="entry name" value="ASPARTATE-SEMIALDEHYDE DEHYDROGENASE"/>
    <property type="match status" value="1"/>
</dbReference>
<dbReference type="PANTHER" id="PTHR46278">
    <property type="entry name" value="DEHYDROGENASE, PUTATIVE-RELATED"/>
    <property type="match status" value="1"/>
</dbReference>
<dbReference type="Pfam" id="PF01118">
    <property type="entry name" value="Semialdhyde_dh"/>
    <property type="match status" value="1"/>
</dbReference>
<dbReference type="Pfam" id="PF02774">
    <property type="entry name" value="Semialdhyde_dhC"/>
    <property type="match status" value="1"/>
</dbReference>
<dbReference type="PIRSF" id="PIRSF000148">
    <property type="entry name" value="ASA_dh"/>
    <property type="match status" value="1"/>
</dbReference>
<dbReference type="SMART" id="SM00859">
    <property type="entry name" value="Semialdhyde_dh"/>
    <property type="match status" value="1"/>
</dbReference>
<dbReference type="SUPFAM" id="SSF55347">
    <property type="entry name" value="Glyceraldehyde-3-phosphate dehydrogenase-like, C-terminal domain"/>
    <property type="match status" value="1"/>
</dbReference>
<dbReference type="SUPFAM" id="SSF51735">
    <property type="entry name" value="NAD(P)-binding Rossmann-fold domains"/>
    <property type="match status" value="1"/>
</dbReference>
<dbReference type="PROSITE" id="PS01103">
    <property type="entry name" value="ASD"/>
    <property type="match status" value="1"/>
</dbReference>